<comment type="catalytic activity">
    <reaction>
        <text>L-glutamate + acetyl-CoA = N-acetyl-L-glutamate + CoA + H(+)</text>
        <dbReference type="Rhea" id="RHEA:24292"/>
        <dbReference type="ChEBI" id="CHEBI:15378"/>
        <dbReference type="ChEBI" id="CHEBI:29985"/>
        <dbReference type="ChEBI" id="CHEBI:44337"/>
        <dbReference type="ChEBI" id="CHEBI:57287"/>
        <dbReference type="ChEBI" id="CHEBI:57288"/>
        <dbReference type="EC" id="2.3.1.1"/>
    </reaction>
</comment>
<comment type="pathway">
    <text>Amino-acid biosynthesis; L-arginine biosynthesis; N(2)-acetyl-L-ornithine from L-glutamate: step 1/4.</text>
</comment>
<comment type="subcellular location">
    <subcellularLocation>
        <location evidence="1">Cytoplasm</location>
    </subcellularLocation>
</comment>
<comment type="miscellaneous">
    <text>A functional ArgA is critical for the production of the phytotoxin syringomycin and, therefore, for pathogenicity in plants.</text>
</comment>
<comment type="similarity">
    <text evidence="2">Belongs to the acetyltransferase family. ArgA subfamily.</text>
</comment>
<organism>
    <name type="scientific">Pseudomonas syringae pv. syringae</name>
    <dbReference type="NCBI Taxonomy" id="321"/>
    <lineage>
        <taxon>Bacteria</taxon>
        <taxon>Pseudomonadati</taxon>
        <taxon>Pseudomonadota</taxon>
        <taxon>Gammaproteobacteria</taxon>
        <taxon>Pseudomonadales</taxon>
        <taxon>Pseudomonadaceae</taxon>
        <taxon>Pseudomonas</taxon>
        <taxon>Pseudomonas syringae</taxon>
    </lineage>
</organism>
<sequence>MPEYVNWLRHASPYINAHRDCTFVVMLPGDGVAHPNFGNIVHDLVLLHSLGVRLVLVHGSRPQIESRLAQRGITPRYHRDLRITDTETLECVIDAVGQLRISIEARLSMDMAASPMQGSRLRVTSGNVVTARPIGVLEGVDYQHTGEVRRVDRKGINRLLDERHIVLLSPLGYSPTGEIFNLACEDVATRAAIDLAADKLLLFGAETGLLDEQGRLVRELRPQQVPAHLQRLGANYQAELLDAAAEACRGGVARSHIVSYAENGALLTELFTRDGGGTLVAQEQFELVREAAIEDVGGLMDLITPLEEQGILVRRSREVLEREITQFSVVEREGLIIACAALYPIADSESGELACLAVNPEYRHGGRGDELLERIENRARALGIKTLFVLTTRTAHWFRERGFEPSSVDRLPSARASLYNYQRNSKIFEKAI</sequence>
<dbReference type="EC" id="2.3.1.1"/>
<dbReference type="EMBL" id="AY374326">
    <property type="protein sequence ID" value="AAQ82442.1"/>
    <property type="molecule type" value="Genomic_DNA"/>
</dbReference>
<dbReference type="RefSeq" id="WP_003403912.1">
    <property type="nucleotide sequence ID" value="NZ_VBUL01000003.1"/>
</dbReference>
<dbReference type="SMR" id="P61919"/>
<dbReference type="OMA" id="KRKYNWD"/>
<dbReference type="UniPathway" id="UPA00068">
    <property type="reaction ID" value="UER00106"/>
</dbReference>
<dbReference type="GO" id="GO:0005737">
    <property type="term" value="C:cytoplasm"/>
    <property type="evidence" value="ECO:0007669"/>
    <property type="project" value="UniProtKB-SubCell"/>
</dbReference>
<dbReference type="GO" id="GO:0004042">
    <property type="term" value="F:L-glutamate N-acetyltransferase activity"/>
    <property type="evidence" value="ECO:0007669"/>
    <property type="project" value="UniProtKB-UniRule"/>
</dbReference>
<dbReference type="GO" id="GO:0006526">
    <property type="term" value="P:L-arginine biosynthetic process"/>
    <property type="evidence" value="ECO:0007669"/>
    <property type="project" value="UniProtKB-UniRule"/>
</dbReference>
<dbReference type="CDD" id="cd04237">
    <property type="entry name" value="AAK_NAGS-ABP"/>
    <property type="match status" value="1"/>
</dbReference>
<dbReference type="CDD" id="cd04301">
    <property type="entry name" value="NAT_SF"/>
    <property type="match status" value="1"/>
</dbReference>
<dbReference type="Gene3D" id="3.40.630.30">
    <property type="match status" value="1"/>
</dbReference>
<dbReference type="Gene3D" id="3.40.1160.10">
    <property type="entry name" value="Acetylglutamate kinase-like"/>
    <property type="match status" value="1"/>
</dbReference>
<dbReference type="HAMAP" id="MF_01105">
    <property type="entry name" value="N_acetyl_glu_synth"/>
    <property type="match status" value="1"/>
</dbReference>
<dbReference type="InterPro" id="IPR036393">
    <property type="entry name" value="AceGlu_kinase-like_sf"/>
</dbReference>
<dbReference type="InterPro" id="IPR016181">
    <property type="entry name" value="Acyl_CoA_acyltransferase"/>
</dbReference>
<dbReference type="InterPro" id="IPR001048">
    <property type="entry name" value="Asp/Glu/Uridylate_kinase"/>
</dbReference>
<dbReference type="InterPro" id="IPR000182">
    <property type="entry name" value="GNAT_dom"/>
</dbReference>
<dbReference type="InterPro" id="IPR033719">
    <property type="entry name" value="NAGS_kin"/>
</dbReference>
<dbReference type="InterPro" id="IPR010167">
    <property type="entry name" value="NH2A_AcTrfase"/>
</dbReference>
<dbReference type="NCBIfam" id="TIGR01890">
    <property type="entry name" value="N-Ac-Glu-synth"/>
    <property type="match status" value="1"/>
</dbReference>
<dbReference type="NCBIfam" id="NF003641">
    <property type="entry name" value="PRK05279.1"/>
    <property type="match status" value="1"/>
</dbReference>
<dbReference type="PANTHER" id="PTHR30602">
    <property type="entry name" value="AMINO-ACID ACETYLTRANSFERASE"/>
    <property type="match status" value="1"/>
</dbReference>
<dbReference type="PANTHER" id="PTHR30602:SF12">
    <property type="entry name" value="AMINO-ACID ACETYLTRANSFERASE NAGS1, CHLOROPLASTIC-RELATED"/>
    <property type="match status" value="1"/>
</dbReference>
<dbReference type="Pfam" id="PF00696">
    <property type="entry name" value="AA_kinase"/>
    <property type="match status" value="1"/>
</dbReference>
<dbReference type="Pfam" id="PF13508">
    <property type="entry name" value="Acetyltransf_7"/>
    <property type="match status" value="1"/>
</dbReference>
<dbReference type="PIRSF" id="PIRSF000423">
    <property type="entry name" value="ArgA"/>
    <property type="match status" value="1"/>
</dbReference>
<dbReference type="SUPFAM" id="SSF55729">
    <property type="entry name" value="Acyl-CoA N-acyltransferases (Nat)"/>
    <property type="match status" value="1"/>
</dbReference>
<dbReference type="SUPFAM" id="SSF53633">
    <property type="entry name" value="Carbamate kinase-like"/>
    <property type="match status" value="1"/>
</dbReference>
<dbReference type="PROSITE" id="PS51186">
    <property type="entry name" value="GNAT"/>
    <property type="match status" value="1"/>
</dbReference>
<proteinExistence type="inferred from homology"/>
<accession>P61919</accession>
<gene>
    <name type="primary">argA</name>
    <name type="synonym">syrA</name>
</gene>
<name>ARGA_PSESY</name>
<evidence type="ECO:0000250" key="1"/>
<evidence type="ECO:0000305" key="2"/>
<reference key="1">
    <citation type="journal article" date="2003" name="Appl. Environ. Microbiol.">
        <title>Characterization of the argA gene required for arginine biosynthesis and syringomycin production by Pseudomonas syringae pv. syringae.</title>
        <authorList>
            <person name="Lu S.E."/>
            <person name="Soule J.D."/>
            <person name="Gross D.C."/>
        </authorList>
    </citation>
    <scope>NUCLEOTIDE SEQUENCE [GENOMIC DNA]</scope>
    <source>
        <strain>B301D</strain>
    </source>
</reference>
<reference key="2">
    <citation type="journal article" date="1988" name="J. Bacteriol.">
        <title>Physical and functional analyses of the syrA and syrB genes involved in syringomycin production by Pseudomonas syringae pv. syringae.</title>
        <authorList>
            <person name="Xu G.W."/>
            <person name="Gross D.C."/>
        </authorList>
    </citation>
    <scope>IMPORTANCE FOR PATHOGENICITY</scope>
</reference>
<keyword id="KW-0012">Acyltransferase</keyword>
<keyword id="KW-0028">Amino-acid biosynthesis</keyword>
<keyword id="KW-0055">Arginine biosynthesis</keyword>
<keyword id="KW-0963">Cytoplasm</keyword>
<keyword id="KW-0808">Transferase</keyword>
<protein>
    <recommendedName>
        <fullName>Amino-acid acetyltransferase</fullName>
        <ecNumber>2.3.1.1</ecNumber>
    </recommendedName>
    <alternativeName>
        <fullName>N-acetylglutamate synthase</fullName>
        <shortName>AGS</shortName>
        <shortName>NAGS</shortName>
    </alternativeName>
</protein>
<feature type="chain" id="PRO_0000186802" description="Amino-acid acetyltransferase">
    <location>
        <begin position="1"/>
        <end position="432"/>
    </location>
</feature>
<feature type="domain" description="N-acetyltransferase">
    <location>
        <begin position="286"/>
        <end position="425"/>
    </location>
</feature>